<proteinExistence type="inferred from homology"/>
<evidence type="ECO:0000255" key="1"/>
<evidence type="ECO:0000305" key="2"/>
<organism>
    <name type="scientific">Trieres chinensis</name>
    <name type="common">Marine centric diatom</name>
    <name type="synonym">Odontella sinensis</name>
    <dbReference type="NCBI Taxonomy" id="1514140"/>
    <lineage>
        <taxon>Eukaryota</taxon>
        <taxon>Sar</taxon>
        <taxon>Stramenopiles</taxon>
        <taxon>Ochrophyta</taxon>
        <taxon>Bacillariophyta</taxon>
        <taxon>Mediophyceae</taxon>
        <taxon>Biddulphiophycidae</taxon>
        <taxon>Eupodiscales</taxon>
        <taxon>Parodontellaceae</taxon>
        <taxon>Trieres</taxon>
    </lineage>
</organism>
<keyword id="KW-0150">Chloroplast</keyword>
<keyword id="KW-0472">Membrane</keyword>
<keyword id="KW-0602">Photosynthesis</keyword>
<keyword id="KW-0603">Photosystem I</keyword>
<keyword id="KW-0934">Plastid</keyword>
<keyword id="KW-0732">Signal</keyword>
<keyword id="KW-0793">Thylakoid</keyword>
<keyword id="KW-0812">Transmembrane</keyword>
<keyword id="KW-1133">Transmembrane helix</keyword>
<feature type="signal peptide" evidence="1">
    <location>
        <begin position="1"/>
        <end position="24"/>
    </location>
</feature>
<feature type="chain" id="PRO_0000207754" description="Photosystem I reaction center subunit III">
    <location>
        <begin position="25"/>
        <end position="185"/>
    </location>
</feature>
<feature type="transmembrane region" description="Helical" evidence="1">
    <location>
        <begin position="104"/>
        <end position="124"/>
    </location>
</feature>
<feature type="transmembrane region" description="Helical" evidence="1">
    <location>
        <begin position="143"/>
        <end position="163"/>
    </location>
</feature>
<accession>P49483</accession>
<geneLocation type="chloroplast"/>
<sequence length="185" mass="20747">MKRFNFLILLSTVLISLFPNRALADIGGLTKCSESPAFEKRLKASVKKLEQRMGKYEAGSPPALALQQQIERTQARFDKYSRSELLCGTDGLPHLIADGRWSHAAEFILPGFGFIYISGWIGWVGRKYLRAVSTTKNPTESEIIINVPLALKIMTTGYIWPISAWQEFISNDLVALDEEVTVSPR</sequence>
<protein>
    <recommendedName>
        <fullName>Photosystem I reaction center subunit III</fullName>
    </recommendedName>
    <alternativeName>
        <fullName>PSI-F</fullName>
    </alternativeName>
</protein>
<reference key="1">
    <citation type="journal article" date="1995" name="Plant Mol. Biol. Rep.">
        <title>The chloroplast genome of a chlorophyll a+c-containing alga, Odontella sinensis.</title>
        <authorList>
            <person name="Kowallik K.V."/>
            <person name="Stoebe B."/>
            <person name="Schaffran I."/>
            <person name="Kroth-Pancic P."/>
            <person name="Freier U."/>
        </authorList>
    </citation>
    <scope>NUCLEOTIDE SEQUENCE [LARGE SCALE GENOMIC DNA]</scope>
</reference>
<name>PSAF_TRICV</name>
<comment type="function">
    <text>Probably participates in efficiency of electron transfer from plastocyanin to P700 (or cytochrome c553 in algae and cyanobacteria). This plastocyanin-docking protein contributes to the specific association of plastocyanin to PSI.</text>
</comment>
<comment type="subcellular location">
    <subcellularLocation>
        <location evidence="2">Plastid</location>
        <location evidence="2">Chloroplast thylakoid membrane</location>
        <topology evidence="2">Multi-pass membrane protein</topology>
    </subcellularLocation>
</comment>
<comment type="similarity">
    <text evidence="2">Belongs to the PsaF family.</text>
</comment>
<gene>
    <name type="primary">psaF</name>
</gene>
<dbReference type="EMBL" id="Z67753">
    <property type="protein sequence ID" value="CAA91702.1"/>
    <property type="molecule type" value="Genomic_DNA"/>
</dbReference>
<dbReference type="PIR" id="S78329">
    <property type="entry name" value="S78329"/>
</dbReference>
<dbReference type="RefSeq" id="NP_043670.1">
    <property type="nucleotide sequence ID" value="NC_001713.1"/>
</dbReference>
<dbReference type="SMR" id="P49483"/>
<dbReference type="GeneID" id="801728"/>
<dbReference type="GO" id="GO:0009535">
    <property type="term" value="C:chloroplast thylakoid membrane"/>
    <property type="evidence" value="ECO:0007669"/>
    <property type="project" value="UniProtKB-SubCell"/>
</dbReference>
<dbReference type="GO" id="GO:0009538">
    <property type="term" value="C:photosystem I reaction center"/>
    <property type="evidence" value="ECO:0007669"/>
    <property type="project" value="InterPro"/>
</dbReference>
<dbReference type="GO" id="GO:0015979">
    <property type="term" value="P:photosynthesis"/>
    <property type="evidence" value="ECO:0007669"/>
    <property type="project" value="UniProtKB-KW"/>
</dbReference>
<dbReference type="FunFam" id="1.10.8.110:FF:000001">
    <property type="entry name" value="Photosystem I reaction center subunit III"/>
    <property type="match status" value="1"/>
</dbReference>
<dbReference type="Gene3D" id="1.10.8.110">
    <property type="entry name" value="Photosystem I PsaF, reaction centre subunit III"/>
    <property type="match status" value="1"/>
</dbReference>
<dbReference type="InterPro" id="IPR003666">
    <property type="entry name" value="PSI_PsaF"/>
</dbReference>
<dbReference type="InterPro" id="IPR036577">
    <property type="entry name" value="PSI_PsaF_sf"/>
</dbReference>
<dbReference type="PANTHER" id="PTHR34939">
    <property type="entry name" value="PHOTOSYSTEM I REACTION CENTER SUBUNIT III, CHLOROPLASTIC"/>
    <property type="match status" value="1"/>
</dbReference>
<dbReference type="PANTHER" id="PTHR34939:SF1">
    <property type="entry name" value="PHOTOSYSTEM I REACTION CENTER SUBUNIT III, CHLOROPLASTIC"/>
    <property type="match status" value="1"/>
</dbReference>
<dbReference type="Pfam" id="PF02507">
    <property type="entry name" value="PSI_PsaF"/>
    <property type="match status" value="1"/>
</dbReference>
<dbReference type="SUPFAM" id="SSF81536">
    <property type="entry name" value="Subunit III of photosystem I reaction centre, PsaF"/>
    <property type="match status" value="1"/>
</dbReference>